<protein>
    <recommendedName>
        <fullName evidence="1">3-isopropylmalate dehydratase large subunit</fullName>
        <ecNumber evidence="1">4.2.1.33</ecNumber>
    </recommendedName>
    <alternativeName>
        <fullName evidence="1">Alpha-IPM isomerase</fullName>
        <shortName evidence="1">IPMI</shortName>
    </alternativeName>
    <alternativeName>
        <fullName evidence="1">Isopropylmalate isomerase</fullName>
    </alternativeName>
</protein>
<comment type="function">
    <text evidence="1">Catalyzes the isomerization between 2-isopropylmalate and 3-isopropylmalate, via the formation of 2-isopropylmaleate.</text>
</comment>
<comment type="catalytic activity">
    <reaction evidence="1">
        <text>(2R,3S)-3-isopropylmalate = (2S)-2-isopropylmalate</text>
        <dbReference type="Rhea" id="RHEA:32287"/>
        <dbReference type="ChEBI" id="CHEBI:1178"/>
        <dbReference type="ChEBI" id="CHEBI:35121"/>
        <dbReference type="EC" id="4.2.1.33"/>
    </reaction>
</comment>
<comment type="cofactor">
    <cofactor evidence="1">
        <name>[4Fe-4S] cluster</name>
        <dbReference type="ChEBI" id="CHEBI:49883"/>
    </cofactor>
    <text evidence="1">Binds 1 [4Fe-4S] cluster per subunit.</text>
</comment>
<comment type="pathway">
    <text evidence="1">Amino-acid biosynthesis; L-leucine biosynthesis; L-leucine from 3-methyl-2-oxobutanoate: step 2/4.</text>
</comment>
<comment type="subunit">
    <text evidence="1">Heterodimer of LeuC and LeuD.</text>
</comment>
<comment type="similarity">
    <text evidence="1">Belongs to the aconitase/IPM isomerase family. LeuC type 1 subfamily.</text>
</comment>
<keyword id="KW-0004">4Fe-4S</keyword>
<keyword id="KW-0028">Amino-acid biosynthesis</keyword>
<keyword id="KW-0100">Branched-chain amino acid biosynthesis</keyword>
<keyword id="KW-0408">Iron</keyword>
<keyword id="KW-0411">Iron-sulfur</keyword>
<keyword id="KW-0432">Leucine biosynthesis</keyword>
<keyword id="KW-0456">Lyase</keyword>
<keyword id="KW-0479">Metal-binding</keyword>
<keyword id="KW-1185">Reference proteome</keyword>
<name>LEUC_CELJU</name>
<proteinExistence type="inferred from homology"/>
<sequence length="473" mass="50477">MVAKTLYDKLWDAHLVHESDDGSALIYIDRHIVHEVTSPQAFDGLRMAGRKPWRVDSILATPDHNVPTTQKERAHGVSGIQDPVSLIQVQTLDDNCDEFGITEFKINDSRQGIVHVVGPESGACLPGMTIVCGDSHTATNGALGALAHGIGTSEVEHVMATQCLVAKKMKNMLIKVDGTLGLGVTPKDVVLAIIAKIGTAGGTGYAMEFGGQVFRDMSMEGRLTVCNMAIEAGARAGMVAVDQTTIDYVKGRPYAPSGDVWEQAVANWRELVSDEGAHFDAVIEIDGASIRPQVSWGTSPEMVVSVEDKVPDPANEPDPVKRKDMIRALEYMGLQANQPITSIYVDRVFIGSCTNSRIEDIRAAAEVVKGKQKAANVKEAIVVPGSGVVKAQAEAEGLDKIFTAAGIEWREPGCSMCLAMNADKLGAGEHCASTSNRNFEGRQGYGGRTHLVSPAMAAAAAIAGHFVDVRSFN</sequence>
<feature type="chain" id="PRO_1000135676" description="3-isopropylmalate dehydratase large subunit">
    <location>
        <begin position="1"/>
        <end position="473"/>
    </location>
</feature>
<feature type="binding site" evidence="1">
    <location>
        <position position="353"/>
    </location>
    <ligand>
        <name>[4Fe-4S] cluster</name>
        <dbReference type="ChEBI" id="CHEBI:49883"/>
    </ligand>
</feature>
<feature type="binding site" evidence="1">
    <location>
        <position position="414"/>
    </location>
    <ligand>
        <name>[4Fe-4S] cluster</name>
        <dbReference type="ChEBI" id="CHEBI:49883"/>
    </ligand>
</feature>
<feature type="binding site" evidence="1">
    <location>
        <position position="417"/>
    </location>
    <ligand>
        <name>[4Fe-4S] cluster</name>
        <dbReference type="ChEBI" id="CHEBI:49883"/>
    </ligand>
</feature>
<evidence type="ECO:0000255" key="1">
    <source>
        <dbReference type="HAMAP-Rule" id="MF_01026"/>
    </source>
</evidence>
<organism>
    <name type="scientific">Cellvibrio japonicus (strain Ueda107)</name>
    <name type="common">Pseudomonas fluorescens subsp. cellulosa</name>
    <dbReference type="NCBI Taxonomy" id="498211"/>
    <lineage>
        <taxon>Bacteria</taxon>
        <taxon>Pseudomonadati</taxon>
        <taxon>Pseudomonadota</taxon>
        <taxon>Gammaproteobacteria</taxon>
        <taxon>Cellvibrionales</taxon>
        <taxon>Cellvibrionaceae</taxon>
        <taxon>Cellvibrio</taxon>
    </lineage>
</organism>
<accession>B3PFN2</accession>
<gene>
    <name evidence="1" type="primary">leuC</name>
    <name type="ordered locus">CJA_1744</name>
</gene>
<reference key="1">
    <citation type="journal article" date="2008" name="J. Bacteriol.">
        <title>Insights into plant cell wall degradation from the genome sequence of the soil bacterium Cellvibrio japonicus.</title>
        <authorList>
            <person name="DeBoy R.T."/>
            <person name="Mongodin E.F."/>
            <person name="Fouts D.E."/>
            <person name="Tailford L.E."/>
            <person name="Khouri H."/>
            <person name="Emerson J.B."/>
            <person name="Mohamoud Y."/>
            <person name="Watkins K."/>
            <person name="Henrissat B."/>
            <person name="Gilbert H.J."/>
            <person name="Nelson K.E."/>
        </authorList>
    </citation>
    <scope>NUCLEOTIDE SEQUENCE [LARGE SCALE GENOMIC DNA]</scope>
    <source>
        <strain>Ueda107</strain>
    </source>
</reference>
<dbReference type="EC" id="4.2.1.33" evidence="1"/>
<dbReference type="EMBL" id="CP000934">
    <property type="protein sequence ID" value="ACE83919.1"/>
    <property type="molecule type" value="Genomic_DNA"/>
</dbReference>
<dbReference type="RefSeq" id="WP_012487365.1">
    <property type="nucleotide sequence ID" value="NC_010995.1"/>
</dbReference>
<dbReference type="SMR" id="B3PFN2"/>
<dbReference type="STRING" id="498211.CJA_1744"/>
<dbReference type="KEGG" id="cja:CJA_1744"/>
<dbReference type="eggNOG" id="COG0065">
    <property type="taxonomic scope" value="Bacteria"/>
</dbReference>
<dbReference type="HOGENOM" id="CLU_006714_3_4_6"/>
<dbReference type="OrthoDB" id="9802769at2"/>
<dbReference type="UniPathway" id="UPA00048">
    <property type="reaction ID" value="UER00071"/>
</dbReference>
<dbReference type="Proteomes" id="UP000001036">
    <property type="component" value="Chromosome"/>
</dbReference>
<dbReference type="GO" id="GO:0003861">
    <property type="term" value="F:3-isopropylmalate dehydratase activity"/>
    <property type="evidence" value="ECO:0007669"/>
    <property type="project" value="UniProtKB-UniRule"/>
</dbReference>
<dbReference type="GO" id="GO:0051539">
    <property type="term" value="F:4 iron, 4 sulfur cluster binding"/>
    <property type="evidence" value="ECO:0007669"/>
    <property type="project" value="UniProtKB-KW"/>
</dbReference>
<dbReference type="GO" id="GO:0046872">
    <property type="term" value="F:metal ion binding"/>
    <property type="evidence" value="ECO:0007669"/>
    <property type="project" value="UniProtKB-KW"/>
</dbReference>
<dbReference type="GO" id="GO:0009098">
    <property type="term" value="P:L-leucine biosynthetic process"/>
    <property type="evidence" value="ECO:0007669"/>
    <property type="project" value="UniProtKB-UniRule"/>
</dbReference>
<dbReference type="CDD" id="cd01583">
    <property type="entry name" value="IPMI"/>
    <property type="match status" value="1"/>
</dbReference>
<dbReference type="FunFam" id="3.30.499.10:FF:000007">
    <property type="entry name" value="3-isopropylmalate dehydratase large subunit"/>
    <property type="match status" value="1"/>
</dbReference>
<dbReference type="Gene3D" id="3.30.499.10">
    <property type="entry name" value="Aconitase, domain 3"/>
    <property type="match status" value="2"/>
</dbReference>
<dbReference type="HAMAP" id="MF_01026">
    <property type="entry name" value="LeuC_type1"/>
    <property type="match status" value="1"/>
</dbReference>
<dbReference type="InterPro" id="IPR004430">
    <property type="entry name" value="3-IsopropMal_deHydase_lsu"/>
</dbReference>
<dbReference type="InterPro" id="IPR015931">
    <property type="entry name" value="Acnase/IPM_dHydase_lsu_aba_1/3"/>
</dbReference>
<dbReference type="InterPro" id="IPR001030">
    <property type="entry name" value="Acoase/IPM_deHydtase_lsu_aba"/>
</dbReference>
<dbReference type="InterPro" id="IPR018136">
    <property type="entry name" value="Aconitase_4Fe-4S_BS"/>
</dbReference>
<dbReference type="InterPro" id="IPR036008">
    <property type="entry name" value="Aconitase_4Fe-4S_dom"/>
</dbReference>
<dbReference type="InterPro" id="IPR050067">
    <property type="entry name" value="IPM_dehydratase_rel_enz"/>
</dbReference>
<dbReference type="InterPro" id="IPR033941">
    <property type="entry name" value="IPMI_cat"/>
</dbReference>
<dbReference type="NCBIfam" id="TIGR00170">
    <property type="entry name" value="leuC"/>
    <property type="match status" value="1"/>
</dbReference>
<dbReference type="NCBIfam" id="NF004016">
    <property type="entry name" value="PRK05478.1"/>
    <property type="match status" value="1"/>
</dbReference>
<dbReference type="NCBIfam" id="NF009116">
    <property type="entry name" value="PRK12466.1"/>
    <property type="match status" value="1"/>
</dbReference>
<dbReference type="PANTHER" id="PTHR43822:SF9">
    <property type="entry name" value="3-ISOPROPYLMALATE DEHYDRATASE"/>
    <property type="match status" value="1"/>
</dbReference>
<dbReference type="PANTHER" id="PTHR43822">
    <property type="entry name" value="HOMOACONITASE, MITOCHONDRIAL-RELATED"/>
    <property type="match status" value="1"/>
</dbReference>
<dbReference type="Pfam" id="PF00330">
    <property type="entry name" value="Aconitase"/>
    <property type="match status" value="1"/>
</dbReference>
<dbReference type="PRINTS" id="PR00415">
    <property type="entry name" value="ACONITASE"/>
</dbReference>
<dbReference type="SUPFAM" id="SSF53732">
    <property type="entry name" value="Aconitase iron-sulfur domain"/>
    <property type="match status" value="1"/>
</dbReference>
<dbReference type="PROSITE" id="PS00450">
    <property type="entry name" value="ACONITASE_1"/>
    <property type="match status" value="1"/>
</dbReference>
<dbReference type="PROSITE" id="PS01244">
    <property type="entry name" value="ACONITASE_2"/>
    <property type="match status" value="1"/>
</dbReference>